<dbReference type="EMBL" id="AL356815">
    <property type="protein sequence ID" value="CAB92632.2"/>
    <property type="molecule type" value="Genomic_DNA"/>
</dbReference>
<dbReference type="EMBL" id="CM002237">
    <property type="protein sequence ID" value="EAA27927.1"/>
    <property type="molecule type" value="Genomic_DNA"/>
</dbReference>
<dbReference type="RefSeq" id="XP_957163.1">
    <property type="nucleotide sequence ID" value="XM_952070.3"/>
</dbReference>
<dbReference type="SMR" id="Q9P534"/>
<dbReference type="STRING" id="367110.Q9P534"/>
<dbReference type="PaxDb" id="5141-EFNCRP00000001899"/>
<dbReference type="EnsemblFungi" id="EAA27927">
    <property type="protein sequence ID" value="EAA27927"/>
    <property type="gene ID" value="NCU01740"/>
</dbReference>
<dbReference type="GeneID" id="3873315"/>
<dbReference type="KEGG" id="ncr:NCU01740"/>
<dbReference type="VEuPathDB" id="FungiDB:NCU01740"/>
<dbReference type="HOGENOM" id="CLU_130004_1_0_1"/>
<dbReference type="InParanoid" id="Q9P534"/>
<dbReference type="OrthoDB" id="2148987at2759"/>
<dbReference type="Proteomes" id="UP000001805">
    <property type="component" value="Chromosome 6, Linkage Group II"/>
</dbReference>
<dbReference type="GO" id="GO:0005634">
    <property type="term" value="C:nucleus"/>
    <property type="evidence" value="ECO:0007669"/>
    <property type="project" value="UniProtKB-SubCell"/>
</dbReference>
<dbReference type="InterPro" id="IPR019098">
    <property type="entry name" value="Histone_chaperone_domain_CHZ"/>
</dbReference>
<dbReference type="Pfam" id="PF09649">
    <property type="entry name" value="CHZ"/>
    <property type="match status" value="1"/>
</dbReference>
<dbReference type="SMART" id="SM01082">
    <property type="entry name" value="CHZ"/>
    <property type="match status" value="1"/>
</dbReference>
<protein>
    <recommendedName>
        <fullName>Histone H2A.Z-specific chaperone chz-1</fullName>
    </recommendedName>
</protein>
<gene>
    <name type="primary">chz-1</name>
    <name type="ORF">B24H17.100</name>
    <name type="ORF">NCU01740</name>
</gene>
<organism>
    <name type="scientific">Neurospora crassa (strain ATCC 24698 / 74-OR23-1A / CBS 708.71 / DSM 1257 / FGSC 987)</name>
    <dbReference type="NCBI Taxonomy" id="367110"/>
    <lineage>
        <taxon>Eukaryota</taxon>
        <taxon>Fungi</taxon>
        <taxon>Dikarya</taxon>
        <taxon>Ascomycota</taxon>
        <taxon>Pezizomycotina</taxon>
        <taxon>Sordariomycetes</taxon>
        <taxon>Sordariomycetidae</taxon>
        <taxon>Sordariales</taxon>
        <taxon>Sordariaceae</taxon>
        <taxon>Neurospora</taxon>
    </lineage>
</organism>
<feature type="chain" id="PRO_0000330216" description="Histone H2A.Z-specific chaperone chz-1">
    <location>
        <begin position="1"/>
        <end position="114"/>
    </location>
</feature>
<feature type="region of interest" description="Disordered" evidence="2">
    <location>
        <begin position="1"/>
        <end position="114"/>
    </location>
</feature>
<feature type="compositionally biased region" description="Polar residues" evidence="2">
    <location>
        <begin position="1"/>
        <end position="22"/>
    </location>
</feature>
<feature type="compositionally biased region" description="Basic and acidic residues" evidence="2">
    <location>
        <begin position="24"/>
        <end position="40"/>
    </location>
</feature>
<feature type="compositionally biased region" description="Acidic residues" evidence="2">
    <location>
        <begin position="41"/>
        <end position="68"/>
    </location>
</feature>
<feature type="compositionally biased region" description="Acidic residues" evidence="2">
    <location>
        <begin position="93"/>
        <end position="114"/>
    </location>
</feature>
<keyword id="KW-0143">Chaperone</keyword>
<keyword id="KW-0539">Nucleus</keyword>
<keyword id="KW-1185">Reference proteome</keyword>
<name>CHZ1_NEUCR</name>
<sequence length="114" mass="12600">MSTENGTTDTTLAGTAEANTPFESKGKGKAAAESEDHPMGEAEDDEDDEDEDETEEPEAEEDNLEEIDPSNVISGPRTRQKEIDYAKAAQDLPAEEDDEEDDEEFVPEDEEMEE</sequence>
<comment type="function">
    <text evidence="1">Forms a chaperone-bound H2A.Z-H2B complex that acts as a source for SWR1 complex-dependent H2A to H2A.Z histone replacement in chromatin.</text>
</comment>
<comment type="subunit">
    <text evidence="1">Forms a heterotrimer with H2A.Z-H2B, stabilizing the association of the histone dimer. Also, with a lower affinity, forms a heterotrimer with H2A-H2B (By similarity).</text>
</comment>
<comment type="subcellular location">
    <subcellularLocation>
        <location evidence="1">Nucleus</location>
    </subcellularLocation>
</comment>
<comment type="similarity">
    <text evidence="3">Belongs to the CHZ1 family.</text>
</comment>
<proteinExistence type="inferred from homology"/>
<accession>Q9P534</accession>
<reference key="1">
    <citation type="journal article" date="2003" name="Nucleic Acids Res.">
        <title>What's in the genome of a filamentous fungus? Analysis of the Neurospora genome sequence.</title>
        <authorList>
            <person name="Mannhaupt G."/>
            <person name="Montrone C."/>
            <person name="Haase D."/>
            <person name="Mewes H.-W."/>
            <person name="Aign V."/>
            <person name="Hoheisel J.D."/>
            <person name="Fartmann B."/>
            <person name="Nyakatura G."/>
            <person name="Kempken F."/>
            <person name="Maier J."/>
            <person name="Schulte U."/>
        </authorList>
    </citation>
    <scope>NUCLEOTIDE SEQUENCE [LARGE SCALE GENOMIC DNA]</scope>
    <source>
        <strain>ATCC 24698 / 74-OR23-1A / CBS 708.71 / DSM 1257 / FGSC 987</strain>
    </source>
</reference>
<reference key="2">
    <citation type="journal article" date="2003" name="Nature">
        <title>The genome sequence of the filamentous fungus Neurospora crassa.</title>
        <authorList>
            <person name="Galagan J.E."/>
            <person name="Calvo S.E."/>
            <person name="Borkovich K.A."/>
            <person name="Selker E.U."/>
            <person name="Read N.D."/>
            <person name="Jaffe D.B."/>
            <person name="FitzHugh W."/>
            <person name="Ma L.-J."/>
            <person name="Smirnov S."/>
            <person name="Purcell S."/>
            <person name="Rehman B."/>
            <person name="Elkins T."/>
            <person name="Engels R."/>
            <person name="Wang S."/>
            <person name="Nielsen C.B."/>
            <person name="Butler J."/>
            <person name="Endrizzi M."/>
            <person name="Qui D."/>
            <person name="Ianakiev P."/>
            <person name="Bell-Pedersen D."/>
            <person name="Nelson M.A."/>
            <person name="Werner-Washburne M."/>
            <person name="Selitrennikoff C.P."/>
            <person name="Kinsey J.A."/>
            <person name="Braun E.L."/>
            <person name="Zelter A."/>
            <person name="Schulte U."/>
            <person name="Kothe G.O."/>
            <person name="Jedd G."/>
            <person name="Mewes H.-W."/>
            <person name="Staben C."/>
            <person name="Marcotte E."/>
            <person name="Greenberg D."/>
            <person name="Roy A."/>
            <person name="Foley K."/>
            <person name="Naylor J."/>
            <person name="Stange-Thomann N."/>
            <person name="Barrett R."/>
            <person name="Gnerre S."/>
            <person name="Kamal M."/>
            <person name="Kamvysselis M."/>
            <person name="Mauceli E.W."/>
            <person name="Bielke C."/>
            <person name="Rudd S."/>
            <person name="Frishman D."/>
            <person name="Krystofova S."/>
            <person name="Rasmussen C."/>
            <person name="Metzenberg R.L."/>
            <person name="Perkins D.D."/>
            <person name="Kroken S."/>
            <person name="Cogoni C."/>
            <person name="Macino G."/>
            <person name="Catcheside D.E.A."/>
            <person name="Li W."/>
            <person name="Pratt R.J."/>
            <person name="Osmani S.A."/>
            <person name="DeSouza C.P.C."/>
            <person name="Glass N.L."/>
            <person name="Orbach M.J."/>
            <person name="Berglund J.A."/>
            <person name="Voelker R."/>
            <person name="Yarden O."/>
            <person name="Plamann M."/>
            <person name="Seiler S."/>
            <person name="Dunlap J.C."/>
            <person name="Radford A."/>
            <person name="Aramayo R."/>
            <person name="Natvig D.O."/>
            <person name="Alex L.A."/>
            <person name="Mannhaupt G."/>
            <person name="Ebbole D.J."/>
            <person name="Freitag M."/>
            <person name="Paulsen I."/>
            <person name="Sachs M.S."/>
            <person name="Lander E.S."/>
            <person name="Nusbaum C."/>
            <person name="Birren B.W."/>
        </authorList>
    </citation>
    <scope>NUCLEOTIDE SEQUENCE [LARGE SCALE GENOMIC DNA]</scope>
    <source>
        <strain>ATCC 24698 / 74-OR23-1A / CBS 708.71 / DSM 1257 / FGSC 987</strain>
    </source>
</reference>
<evidence type="ECO:0000250" key="1"/>
<evidence type="ECO:0000256" key="2">
    <source>
        <dbReference type="SAM" id="MobiDB-lite"/>
    </source>
</evidence>
<evidence type="ECO:0000305" key="3"/>